<name>DCUP_DROVI</name>
<keyword id="KW-0963">Cytoplasm</keyword>
<keyword id="KW-0210">Decarboxylase</keyword>
<keyword id="KW-0350">Heme biosynthesis</keyword>
<keyword id="KW-0456">Lyase</keyword>
<keyword id="KW-0627">Porphyrin biosynthesis</keyword>
<reference key="1">
    <citation type="submission" date="1997-03" db="EMBL/GenBank/DDBJ databases">
        <authorList>
            <person name="Gao L."/>
            <person name="Wang S."/>
            <person name="Hickey D.A."/>
        </authorList>
    </citation>
    <scope>NUCLEOTIDE SEQUENCE [GENOMIC DNA]</scope>
</reference>
<organism>
    <name type="scientific">Drosophila virilis</name>
    <name type="common">Fruit fly</name>
    <dbReference type="NCBI Taxonomy" id="7244"/>
    <lineage>
        <taxon>Eukaryota</taxon>
        <taxon>Metazoa</taxon>
        <taxon>Ecdysozoa</taxon>
        <taxon>Arthropoda</taxon>
        <taxon>Hexapoda</taxon>
        <taxon>Insecta</taxon>
        <taxon>Pterygota</taxon>
        <taxon>Neoptera</taxon>
        <taxon>Endopterygota</taxon>
        <taxon>Diptera</taxon>
        <taxon>Brachycera</taxon>
        <taxon>Muscomorpha</taxon>
        <taxon>Ephydroidea</taxon>
        <taxon>Drosophilidae</taxon>
        <taxon>Drosophila</taxon>
    </lineage>
</organism>
<dbReference type="EC" id="4.1.1.37"/>
<dbReference type="EMBL" id="U93213">
    <property type="protein sequence ID" value="AAB66372.1"/>
    <property type="molecule type" value="Genomic_DNA"/>
</dbReference>
<dbReference type="SMR" id="O18601"/>
<dbReference type="eggNOG" id="KOG2872">
    <property type="taxonomic scope" value="Eukaryota"/>
</dbReference>
<dbReference type="OrthoDB" id="339900at2759"/>
<dbReference type="UniPathway" id="UPA00251">
    <property type="reaction ID" value="UER00321"/>
</dbReference>
<dbReference type="GO" id="GO:0005829">
    <property type="term" value="C:cytosol"/>
    <property type="evidence" value="ECO:0007669"/>
    <property type="project" value="UniProtKB-SubCell"/>
</dbReference>
<dbReference type="GO" id="GO:0004853">
    <property type="term" value="F:uroporphyrinogen decarboxylase activity"/>
    <property type="evidence" value="ECO:0007669"/>
    <property type="project" value="UniProtKB-EC"/>
</dbReference>
<dbReference type="GO" id="GO:0006782">
    <property type="term" value="P:protoporphyrinogen IX biosynthetic process"/>
    <property type="evidence" value="ECO:0007669"/>
    <property type="project" value="UniProtKB-UniPathway"/>
</dbReference>
<dbReference type="CDD" id="cd00717">
    <property type="entry name" value="URO-D"/>
    <property type="match status" value="1"/>
</dbReference>
<dbReference type="FunFam" id="3.20.20.210:FF:000001">
    <property type="entry name" value="Uroporphyrinogen decarboxylase"/>
    <property type="match status" value="1"/>
</dbReference>
<dbReference type="Gene3D" id="3.20.20.210">
    <property type="match status" value="1"/>
</dbReference>
<dbReference type="HAMAP" id="MF_00218">
    <property type="entry name" value="URO_D"/>
    <property type="match status" value="1"/>
</dbReference>
<dbReference type="InterPro" id="IPR038071">
    <property type="entry name" value="UROD/MetE-like_sf"/>
</dbReference>
<dbReference type="InterPro" id="IPR006361">
    <property type="entry name" value="Uroporphyrinogen_deCO2ase_HemE"/>
</dbReference>
<dbReference type="InterPro" id="IPR000257">
    <property type="entry name" value="Uroporphyrinogen_deCOase"/>
</dbReference>
<dbReference type="NCBIfam" id="TIGR01464">
    <property type="entry name" value="hemE"/>
    <property type="match status" value="1"/>
</dbReference>
<dbReference type="PANTHER" id="PTHR21091">
    <property type="entry name" value="METHYLTETRAHYDROFOLATE:HOMOCYSTEINE METHYLTRANSFERASE RELATED"/>
    <property type="match status" value="1"/>
</dbReference>
<dbReference type="PANTHER" id="PTHR21091:SF169">
    <property type="entry name" value="UROPORPHYRINOGEN DECARBOXYLASE"/>
    <property type="match status" value="1"/>
</dbReference>
<dbReference type="Pfam" id="PF01208">
    <property type="entry name" value="URO-D"/>
    <property type="match status" value="1"/>
</dbReference>
<dbReference type="SUPFAM" id="SSF51726">
    <property type="entry name" value="UROD/MetE-like"/>
    <property type="match status" value="1"/>
</dbReference>
<dbReference type="PROSITE" id="PS00906">
    <property type="entry name" value="UROD_1"/>
    <property type="match status" value="1"/>
</dbReference>
<dbReference type="PROSITE" id="PS00907">
    <property type="entry name" value="UROD_2"/>
    <property type="match status" value="1"/>
</dbReference>
<evidence type="ECO:0000250" key="1">
    <source>
        <dbReference type="UniProtKB" id="P06132"/>
    </source>
</evidence>
<evidence type="ECO:0000250" key="2">
    <source>
        <dbReference type="UniProtKB" id="P70697"/>
    </source>
</evidence>
<evidence type="ECO:0000250" key="3">
    <source>
        <dbReference type="UniProtKB" id="Q9V595"/>
    </source>
</evidence>
<evidence type="ECO:0000305" key="4"/>
<comment type="function">
    <text evidence="1">Catalyzes the decarboxylation of four acetate groups of uroporphyrinogen-III to yield coproporphyrinogen-III.</text>
</comment>
<comment type="catalytic activity">
    <reaction evidence="1">
        <text>uroporphyrinogen III + 4 H(+) = coproporphyrinogen III + 4 CO2</text>
        <dbReference type="Rhea" id="RHEA:19865"/>
        <dbReference type="ChEBI" id="CHEBI:15378"/>
        <dbReference type="ChEBI" id="CHEBI:16526"/>
        <dbReference type="ChEBI" id="CHEBI:57308"/>
        <dbReference type="ChEBI" id="CHEBI:57309"/>
        <dbReference type="EC" id="4.1.1.37"/>
    </reaction>
    <physiologicalReaction direction="left-to-right" evidence="1">
        <dbReference type="Rhea" id="RHEA:19866"/>
    </physiologicalReaction>
</comment>
<comment type="pathway">
    <text evidence="1">Porphyrin-containing compound metabolism; protoporphyrin-IX biosynthesis; coproporphyrinogen-III from 5-aminolevulinate: step 4/4.</text>
</comment>
<comment type="subunit">
    <text evidence="1">Homodimer.</text>
</comment>
<comment type="subcellular location">
    <subcellularLocation>
        <location evidence="2">Cytoplasm</location>
        <location evidence="2">Cytosol</location>
    </subcellularLocation>
</comment>
<comment type="similarity">
    <text evidence="4">Belongs to the uroporphyrinogen decarboxylase family.</text>
</comment>
<accession>O18601</accession>
<protein>
    <recommendedName>
        <fullName>Uroporphyrinogen decarboxylase</fullName>
        <shortName>UPD</shortName>
        <shortName>URO-D</shortName>
        <ecNumber>4.1.1.37</ecNumber>
    </recommendedName>
</protein>
<gene>
    <name evidence="3" type="primary">Urod</name>
    <name evidence="3" type="synonym">Updo</name>
</gene>
<proteinExistence type="inferred from homology"/>
<sequence>MTIKNNNNNNTLKHLQAFPPLKNDNLLRAARGEVVDRVPVWVMRQAGRYLPEFQELRKQHDFFTVCRTPELACEVTMQPLRRFDLDASIIFSDILVIPQALGLTVEMHAGVGPVLPQPICTPEDLKRLTPDGALSRLTYVGDAITMMRHKLDGRVPLIGFTGAPWTLMGYMIEGGGSKTMSKAKAWLTNYPEDTKLFLILLTDVIVDYLEMQVIAGAQMLQVFESSAEHLSKEEFLLGSEPYLRRIRDDLVDRLTKKVIPAVPLVSSYPNNIFTLLTYLISLLIIFAKGAGHSLKEQSELGYDVIGLDWTVDPVEARAVVGPNITLQGNLDPQSMYCEPNELRSLATEMVHKCGKSRYIANVGHGITPQTPITSMEVLVEAAHNAL</sequence>
<feature type="chain" id="PRO_0000187574" description="Uroporphyrinogen decarboxylase">
    <location>
        <begin position="1"/>
        <end position="386"/>
    </location>
</feature>
<feature type="binding site" evidence="1">
    <location>
        <position position="44"/>
    </location>
    <ligand>
        <name>coproporphyrinogen I</name>
        <dbReference type="ChEBI" id="CHEBI:62631"/>
    </ligand>
</feature>
<feature type="binding site" evidence="1">
    <location>
        <position position="44"/>
    </location>
    <ligand>
        <name>coproporphyrinogen III</name>
        <dbReference type="ChEBI" id="CHEBI:57309"/>
    </ligand>
</feature>
<feature type="binding site" evidence="1">
    <location>
        <position position="46"/>
    </location>
    <ligand>
        <name>coproporphyrinogen I</name>
        <dbReference type="ChEBI" id="CHEBI:62631"/>
    </ligand>
</feature>
<feature type="binding site" evidence="1">
    <location>
        <position position="46"/>
    </location>
    <ligand>
        <name>coproporphyrinogen III</name>
        <dbReference type="ChEBI" id="CHEBI:57309"/>
    </ligand>
</feature>
<feature type="binding site" evidence="1">
    <location>
        <position position="48"/>
    </location>
    <ligand>
        <name>coproporphyrinogen I</name>
        <dbReference type="ChEBI" id="CHEBI:62631"/>
    </ligand>
</feature>
<feature type="binding site" evidence="1">
    <location>
        <position position="48"/>
    </location>
    <ligand>
        <name>coproporphyrinogen III</name>
        <dbReference type="ChEBI" id="CHEBI:57309"/>
    </ligand>
</feature>
<feature type="binding site" evidence="1">
    <location>
        <position position="57"/>
    </location>
    <ligand>
        <name>coproporphyrinogen I</name>
        <dbReference type="ChEBI" id="CHEBI:62631"/>
    </ligand>
</feature>
<feature type="binding site" evidence="1">
    <location>
        <position position="93"/>
    </location>
    <ligand>
        <name>coproporphyrinogen I</name>
        <dbReference type="ChEBI" id="CHEBI:62631"/>
    </ligand>
</feature>
<feature type="binding site" evidence="1">
    <location>
        <position position="93"/>
    </location>
    <ligand>
        <name>coproporphyrinogen III</name>
        <dbReference type="ChEBI" id="CHEBI:57309"/>
    </ligand>
</feature>
<feature type="binding site" evidence="1">
    <location>
        <position position="170"/>
    </location>
    <ligand>
        <name>coproporphyrinogen I</name>
        <dbReference type="ChEBI" id="CHEBI:62631"/>
    </ligand>
</feature>
<feature type="binding site" evidence="1">
    <location>
        <position position="170"/>
    </location>
    <ligand>
        <name>coproporphyrinogen III</name>
        <dbReference type="ChEBI" id="CHEBI:57309"/>
    </ligand>
</feature>
<feature type="binding site" evidence="1">
    <location>
        <position position="225"/>
    </location>
    <ligand>
        <name>coproporphyrinogen I</name>
        <dbReference type="ChEBI" id="CHEBI:62631"/>
    </ligand>
</feature>
<feature type="binding site" evidence="1">
    <location>
        <position position="225"/>
    </location>
    <ligand>
        <name>coproporphyrinogen III</name>
        <dbReference type="ChEBI" id="CHEBI:57309"/>
    </ligand>
</feature>
<feature type="binding site" evidence="1">
    <location>
        <position position="364"/>
    </location>
    <ligand>
        <name>coproporphyrinogen I</name>
        <dbReference type="ChEBI" id="CHEBI:62631"/>
    </ligand>
</feature>
<feature type="binding site" evidence="1">
    <location>
        <position position="364"/>
    </location>
    <ligand>
        <name>coproporphyrinogen III</name>
        <dbReference type="ChEBI" id="CHEBI:57309"/>
    </ligand>
</feature>
<feature type="site" description="Transition state stabilizer" evidence="1">
    <location>
        <position position="93"/>
    </location>
</feature>